<evidence type="ECO:0000250" key="1">
    <source>
        <dbReference type="UniProtKB" id="P00730"/>
    </source>
</evidence>
<evidence type="ECO:0000250" key="2">
    <source>
        <dbReference type="UniProtKB" id="P15085"/>
    </source>
</evidence>
<evidence type="ECO:0000250" key="3">
    <source>
        <dbReference type="UniProtKB" id="P38836"/>
    </source>
</evidence>
<evidence type="ECO:0000255" key="4"/>
<evidence type="ECO:0000255" key="5">
    <source>
        <dbReference type="PROSITE-ProRule" id="PRU01379"/>
    </source>
</evidence>
<evidence type="ECO:0000256" key="6">
    <source>
        <dbReference type="SAM" id="MobiDB-lite"/>
    </source>
</evidence>
<evidence type="ECO:0000305" key="7"/>
<reference key="1">
    <citation type="journal article" date="2011" name="PLoS Genet.">
        <title>Comparative genomic analysis of human fungal pathogens causing paracoccidioidomycosis.</title>
        <authorList>
            <person name="Desjardins C.A."/>
            <person name="Champion M.D."/>
            <person name="Holder J.W."/>
            <person name="Muszewska A."/>
            <person name="Goldberg J."/>
            <person name="Bailao A.M."/>
            <person name="Brigido M.M."/>
            <person name="Ferreira M.E."/>
            <person name="Garcia A.M."/>
            <person name="Grynberg M."/>
            <person name="Gujja S."/>
            <person name="Heiman D.I."/>
            <person name="Henn M.R."/>
            <person name="Kodira C.D."/>
            <person name="Leon-Narvaez H."/>
            <person name="Longo L.V.G."/>
            <person name="Ma L.-J."/>
            <person name="Malavazi I."/>
            <person name="Matsuo A.L."/>
            <person name="Morais F.V."/>
            <person name="Pereira M."/>
            <person name="Rodriguez-Brito S."/>
            <person name="Sakthikumar S."/>
            <person name="Salem-Izacc S.M."/>
            <person name="Sykes S.M."/>
            <person name="Teixeira M.M."/>
            <person name="Vallejo M.C."/>
            <person name="Walter M.E."/>
            <person name="Yandava C."/>
            <person name="Young S."/>
            <person name="Zeng Q."/>
            <person name="Zucker J."/>
            <person name="Felipe M.S."/>
            <person name="Goldman G.H."/>
            <person name="Haas B.J."/>
            <person name="McEwen J.G."/>
            <person name="Nino-Vega G."/>
            <person name="Puccia R."/>
            <person name="San-Blas G."/>
            <person name="Soares C.M."/>
            <person name="Birren B.W."/>
            <person name="Cuomo C.A."/>
        </authorList>
    </citation>
    <scope>NUCLEOTIDE SEQUENCE [LARGE SCALE GENOMIC DNA]</scope>
    <source>
        <strain>ATCC MYA-826 / Pb01</strain>
    </source>
</reference>
<feature type="signal peptide" evidence="4">
    <location>
        <begin position="1"/>
        <end position="21"/>
    </location>
</feature>
<feature type="propeptide" id="PRO_0000453246" evidence="3">
    <location>
        <begin position="22"/>
        <end position="175"/>
    </location>
</feature>
<feature type="chain" id="PRO_0000411186" description="Inactive metallocarboxypeptidase ECM14">
    <location>
        <begin position="176"/>
        <end position="591"/>
    </location>
</feature>
<feature type="domain" description="Peptidase M14" evidence="5">
    <location>
        <begin position="203"/>
        <end position="523"/>
    </location>
</feature>
<feature type="region of interest" description="Disordered" evidence="6">
    <location>
        <begin position="533"/>
        <end position="591"/>
    </location>
</feature>
<feature type="compositionally biased region" description="Basic and acidic residues" evidence="6">
    <location>
        <begin position="533"/>
        <end position="543"/>
    </location>
</feature>
<feature type="compositionally biased region" description="Acidic residues" evidence="6">
    <location>
        <begin position="544"/>
        <end position="559"/>
    </location>
</feature>
<feature type="compositionally biased region" description="Acidic residues" evidence="6">
    <location>
        <begin position="573"/>
        <end position="582"/>
    </location>
</feature>
<feature type="binding site" evidence="1">
    <location>
        <begin position="265"/>
        <end position="268"/>
    </location>
    <ligand>
        <name>substrate</name>
    </ligand>
</feature>
<feature type="binding site" evidence="5">
    <location>
        <position position="265"/>
    </location>
    <ligand>
        <name>Zn(2+)</name>
        <dbReference type="ChEBI" id="CHEBI:29105"/>
        <note>catalytic</note>
    </ligand>
</feature>
<feature type="binding site" evidence="5">
    <location>
        <position position="268"/>
    </location>
    <ligand>
        <name>Zn(2+)</name>
        <dbReference type="ChEBI" id="CHEBI:29105"/>
        <note>catalytic</note>
    </ligand>
</feature>
<feature type="binding site" evidence="1">
    <location>
        <position position="323"/>
    </location>
    <ligand>
        <name>substrate</name>
    </ligand>
</feature>
<feature type="binding site" evidence="1">
    <location>
        <begin position="340"/>
        <end position="341"/>
    </location>
    <ligand>
        <name>substrate</name>
    </ligand>
</feature>
<feature type="binding site" evidence="5">
    <location>
        <position position="397"/>
    </location>
    <ligand>
        <name>Zn(2+)</name>
        <dbReference type="ChEBI" id="CHEBI:29105"/>
        <note>catalytic</note>
    </ligand>
</feature>
<feature type="binding site" evidence="1">
    <location>
        <begin position="398"/>
        <end position="399"/>
    </location>
    <ligand>
        <name>substrate</name>
    </ligand>
</feature>
<feature type="glycosylation site" description="N-linked (GlcNAc...) asparagine" evidence="4">
    <location>
        <position position="350"/>
    </location>
</feature>
<feature type="glycosylation site" description="N-linked (GlcNAc...) asparagine" evidence="4">
    <location>
        <position position="381"/>
    </location>
</feature>
<feature type="disulfide bond" evidence="2">
    <location>
        <begin position="334"/>
        <end position="357"/>
    </location>
</feature>
<comment type="function">
    <text evidence="3">Inactive carboxypeptidase that may play a role in cell wall organization and biogenesis.</text>
</comment>
<comment type="cofactor">
    <cofactor evidence="1">
        <name>Zn(2+)</name>
        <dbReference type="ChEBI" id="CHEBI:29105"/>
    </cofactor>
    <text evidence="1">Binds 1 zinc ion per subunit.</text>
</comment>
<comment type="subcellular location">
    <subcellularLocation>
        <location evidence="3">Vacuole</location>
    </subcellularLocation>
    <subcellularLocation>
        <location evidence="3">Secreted</location>
    </subcellularLocation>
</comment>
<comment type="similarity">
    <text evidence="7">Belongs to the peptidase M14 family.</text>
</comment>
<comment type="caution">
    <text evidence="3">Lacks the conserved Glu residue in position 489 essential for carbopeptidase activity. The mature form lacks catalytic activity towards synthetic peptide substrates.</text>
</comment>
<name>ECM14_PARBA</name>
<keyword id="KW-0961">Cell wall biogenesis/degradation</keyword>
<keyword id="KW-1015">Disulfide bond</keyword>
<keyword id="KW-0325">Glycoprotein</keyword>
<keyword id="KW-0479">Metal-binding</keyword>
<keyword id="KW-1185">Reference proteome</keyword>
<keyword id="KW-0964">Secreted</keyword>
<keyword id="KW-0732">Signal</keyword>
<keyword id="KW-0926">Vacuole</keyword>
<keyword id="KW-0862">Zinc</keyword>
<organism>
    <name type="scientific">Paracoccidioides lutzii (strain ATCC MYA-826 / Pb01)</name>
    <name type="common">Paracoccidioides brasiliensis</name>
    <dbReference type="NCBI Taxonomy" id="502779"/>
    <lineage>
        <taxon>Eukaryota</taxon>
        <taxon>Fungi</taxon>
        <taxon>Dikarya</taxon>
        <taxon>Ascomycota</taxon>
        <taxon>Pezizomycotina</taxon>
        <taxon>Eurotiomycetes</taxon>
        <taxon>Eurotiomycetidae</taxon>
        <taxon>Onygenales</taxon>
        <taxon>Ajellomycetaceae</taxon>
        <taxon>Paracoccidioides</taxon>
    </lineage>
</organism>
<gene>
    <name type="primary">ECM14</name>
    <name type="ORF">PAAG_09024</name>
</gene>
<protein>
    <recommendedName>
        <fullName evidence="7">Inactive metallocarboxypeptidase ECM14</fullName>
    </recommendedName>
</protein>
<dbReference type="EMBL" id="KN294053">
    <property type="protein sequence ID" value="EEH40571.1"/>
    <property type="molecule type" value="Genomic_DNA"/>
</dbReference>
<dbReference type="RefSeq" id="XP_002789066.1">
    <property type="nucleotide sequence ID" value="XM_002789020.2"/>
</dbReference>
<dbReference type="SMR" id="C1HE31"/>
<dbReference type="STRING" id="502779.C1HE31"/>
<dbReference type="GlyCosmos" id="C1HE31">
    <property type="glycosylation" value="2 sites, No reported glycans"/>
</dbReference>
<dbReference type="GeneID" id="9092277"/>
<dbReference type="KEGG" id="pbl:PAAG_09024"/>
<dbReference type="VEuPathDB" id="FungiDB:PAAG_09024"/>
<dbReference type="eggNOG" id="KOG2650">
    <property type="taxonomic scope" value="Eukaryota"/>
</dbReference>
<dbReference type="HOGENOM" id="CLU_019326_1_0_1"/>
<dbReference type="OMA" id="WFYHQLH"/>
<dbReference type="OrthoDB" id="3626597at2759"/>
<dbReference type="Proteomes" id="UP000002059">
    <property type="component" value="Partially assembled WGS sequence"/>
</dbReference>
<dbReference type="GO" id="GO:0005576">
    <property type="term" value="C:extracellular region"/>
    <property type="evidence" value="ECO:0007669"/>
    <property type="project" value="UniProtKB-SubCell"/>
</dbReference>
<dbReference type="GO" id="GO:0005773">
    <property type="term" value="C:vacuole"/>
    <property type="evidence" value="ECO:0007669"/>
    <property type="project" value="UniProtKB-SubCell"/>
</dbReference>
<dbReference type="GO" id="GO:0008270">
    <property type="term" value="F:zinc ion binding"/>
    <property type="evidence" value="ECO:0007669"/>
    <property type="project" value="InterPro"/>
</dbReference>
<dbReference type="GO" id="GO:0071555">
    <property type="term" value="P:cell wall organization"/>
    <property type="evidence" value="ECO:0007669"/>
    <property type="project" value="UniProtKB-KW"/>
</dbReference>
<dbReference type="GO" id="GO:0006508">
    <property type="term" value="P:proteolysis"/>
    <property type="evidence" value="ECO:0007669"/>
    <property type="project" value="InterPro"/>
</dbReference>
<dbReference type="CDD" id="cd03860">
    <property type="entry name" value="M14_CP_A-B_like"/>
    <property type="match status" value="1"/>
</dbReference>
<dbReference type="FunFam" id="3.40.630.10:FF:000060">
    <property type="entry name" value="Putative metallocarboxypeptidase ecm14"/>
    <property type="match status" value="1"/>
</dbReference>
<dbReference type="Gene3D" id="3.40.630.10">
    <property type="entry name" value="Zn peptidases"/>
    <property type="match status" value="1"/>
</dbReference>
<dbReference type="InterPro" id="IPR000834">
    <property type="entry name" value="Peptidase_M14"/>
</dbReference>
<dbReference type="PANTHER" id="PTHR11705:SF147">
    <property type="entry name" value="INACTIVE METALLOCARBOXYPEPTIDASE ECM14"/>
    <property type="match status" value="1"/>
</dbReference>
<dbReference type="PANTHER" id="PTHR11705">
    <property type="entry name" value="PROTEASE FAMILY M14 CARBOXYPEPTIDASE A,B"/>
    <property type="match status" value="1"/>
</dbReference>
<dbReference type="Pfam" id="PF00246">
    <property type="entry name" value="Peptidase_M14"/>
    <property type="match status" value="1"/>
</dbReference>
<dbReference type="PRINTS" id="PR00765">
    <property type="entry name" value="CRBOXYPTASEA"/>
</dbReference>
<dbReference type="SMART" id="SM00631">
    <property type="entry name" value="Zn_pept"/>
    <property type="match status" value="1"/>
</dbReference>
<dbReference type="SUPFAM" id="SSF54897">
    <property type="entry name" value="Protease propeptides/inhibitors"/>
    <property type="match status" value="1"/>
</dbReference>
<dbReference type="SUPFAM" id="SSF53187">
    <property type="entry name" value="Zn-dependent exopeptidases"/>
    <property type="match status" value="1"/>
</dbReference>
<dbReference type="PROSITE" id="PS00132">
    <property type="entry name" value="CARBOXYPEPT_ZN_1"/>
    <property type="match status" value="1"/>
</dbReference>
<dbReference type="PROSITE" id="PS52035">
    <property type="entry name" value="PEPTIDASE_M14"/>
    <property type="match status" value="1"/>
</dbReference>
<proteinExistence type="inferred from homology"/>
<sequence>MRLFARLEVLAILACAVPIAAIPSFLSNSYPAHPAEGVSLFPQTQPQAPLGLWTRLRNTVIERLWRVPPQLNKNRPGKQGKFPLFSAPVSLRARYGDDVVLRFTIRNAEEVKALAEASNILFLDVWASTDEWVDIRLTKDVVPSLLGLLPQSLQTSHIPLIHDLPQTIYESYPSSSQRSSYDVQGFSPSTKHSSDITNIFFQDYQPFSVIVTWMRFLTSMFSSHVQIINIGSTFEGRDIPALQIGVWPANNPKPRKTVVVSGGSHAREWISVSTVNYVAYSLITSYAKSKHVAELLQQFDFIFIPTLNPDGYIYTWEVDRIWRKNRQETSLPFCPGVDLDRTWGFEWDGNITADNPCSESYPGEDPFAGVEAKQFSQWAKNQTAQNNIEFVAFIDLHSYSQQIRYPYSYSCLPNPPNLENLEELAIGIAKAIRLTNRETYEVSSACEGFMASQAKAKSDDPFPRIERTGGSALDWFYHDLNVKYSYQIKLRDRGSYGFLLPRENIVPTGQEMFNAVMVLGRFLSGHDGFGHLDWEDESQRPKADEDDIPSENELGENDDSWIPFDYRNHDDQNEGEGYDNDEWGFRRRRKG</sequence>
<accession>C1HE31</accession>